<proteinExistence type="inferred from homology"/>
<feature type="chain" id="PRO_0000139657" description="Xanthine-guanine phosphoribosyltransferase">
    <location>
        <begin position="1"/>
        <end position="176"/>
    </location>
</feature>
<feature type="binding site" evidence="1">
    <location>
        <begin position="51"/>
        <end position="52"/>
    </location>
    <ligand>
        <name>5-phospho-alpha-D-ribose 1-diphosphate</name>
        <dbReference type="ChEBI" id="CHEBI:58017"/>
    </ligand>
</feature>
<feature type="binding site" evidence="1">
    <location>
        <begin position="110"/>
        <end position="118"/>
    </location>
    <ligand>
        <name>5-phospho-alpha-D-ribose 1-diphosphate</name>
        <dbReference type="ChEBI" id="CHEBI:58017"/>
    </ligand>
</feature>
<feature type="binding site" evidence="1">
    <location>
        <position position="111"/>
    </location>
    <ligand>
        <name>Mg(2+)</name>
        <dbReference type="ChEBI" id="CHEBI:18420"/>
    </ligand>
</feature>
<feature type="binding site" evidence="1">
    <location>
        <begin position="114"/>
        <end position="118"/>
    </location>
    <ligand>
        <name>GMP</name>
        <dbReference type="ChEBI" id="CHEBI:58115"/>
    </ligand>
</feature>
<feature type="binding site" evidence="1">
    <location>
        <position position="114"/>
    </location>
    <ligand>
        <name>guanine</name>
        <dbReference type="ChEBI" id="CHEBI:16235"/>
    </ligand>
</feature>
<feature type="binding site" evidence="1">
    <location>
        <position position="114"/>
    </location>
    <ligand>
        <name>xanthine</name>
        <dbReference type="ChEBI" id="CHEBI:17712"/>
    </ligand>
</feature>
<feature type="binding site" evidence="1">
    <location>
        <begin position="156"/>
        <end position="157"/>
    </location>
    <ligand>
        <name>GMP</name>
        <dbReference type="ChEBI" id="CHEBI:58115"/>
    </ligand>
</feature>
<feature type="binding site" evidence="1">
    <location>
        <position position="157"/>
    </location>
    <ligand>
        <name>guanine</name>
        <dbReference type="ChEBI" id="CHEBI:16235"/>
    </ligand>
</feature>
<feature type="binding site" evidence="1">
    <location>
        <position position="157"/>
    </location>
    <ligand>
        <name>xanthine</name>
        <dbReference type="ChEBI" id="CHEBI:17712"/>
    </ligand>
</feature>
<dbReference type="EC" id="2.4.2.-" evidence="1"/>
<dbReference type="EC" id="2.4.2.22" evidence="1"/>
<dbReference type="EMBL" id="BA000040">
    <property type="protein sequence ID" value="BAC50875.1"/>
    <property type="molecule type" value="Genomic_DNA"/>
</dbReference>
<dbReference type="RefSeq" id="NP_772250.1">
    <property type="nucleotide sequence ID" value="NC_004463.1"/>
</dbReference>
<dbReference type="SMR" id="Q89IM4"/>
<dbReference type="FunCoup" id="Q89IM4">
    <property type="interactions" value="82"/>
</dbReference>
<dbReference type="STRING" id="224911.AAV28_25530"/>
<dbReference type="EnsemblBacteria" id="BAC50875">
    <property type="protein sequence ID" value="BAC50875"/>
    <property type="gene ID" value="BAC50875"/>
</dbReference>
<dbReference type="KEGG" id="bja:bll5610"/>
<dbReference type="PATRIC" id="fig|224911.5.peg.5717"/>
<dbReference type="eggNOG" id="COG2236">
    <property type="taxonomic scope" value="Bacteria"/>
</dbReference>
<dbReference type="HOGENOM" id="CLU_080904_3_0_5"/>
<dbReference type="InParanoid" id="Q89IM4"/>
<dbReference type="OrthoDB" id="9789690at2"/>
<dbReference type="PhylomeDB" id="Q89IM4"/>
<dbReference type="UniPathway" id="UPA00602">
    <property type="reaction ID" value="UER00658"/>
</dbReference>
<dbReference type="UniPathway" id="UPA00909">
    <property type="reaction ID" value="UER00887"/>
</dbReference>
<dbReference type="Proteomes" id="UP000002526">
    <property type="component" value="Chromosome"/>
</dbReference>
<dbReference type="GO" id="GO:0005886">
    <property type="term" value="C:plasma membrane"/>
    <property type="evidence" value="ECO:0007669"/>
    <property type="project" value="UniProtKB-SubCell"/>
</dbReference>
<dbReference type="GO" id="GO:0052657">
    <property type="term" value="F:guanine phosphoribosyltransferase activity"/>
    <property type="evidence" value="ECO:0007669"/>
    <property type="project" value="RHEA"/>
</dbReference>
<dbReference type="GO" id="GO:0004422">
    <property type="term" value="F:hypoxanthine phosphoribosyltransferase activity"/>
    <property type="evidence" value="ECO:0007669"/>
    <property type="project" value="RHEA"/>
</dbReference>
<dbReference type="GO" id="GO:0000287">
    <property type="term" value="F:magnesium ion binding"/>
    <property type="evidence" value="ECO:0007669"/>
    <property type="project" value="UniProtKB-UniRule"/>
</dbReference>
<dbReference type="GO" id="GO:0000310">
    <property type="term" value="F:xanthine phosphoribosyltransferase activity"/>
    <property type="evidence" value="ECO:0007669"/>
    <property type="project" value="UniProtKB-UniRule"/>
</dbReference>
<dbReference type="GO" id="GO:0032263">
    <property type="term" value="P:GMP salvage"/>
    <property type="evidence" value="ECO:0007669"/>
    <property type="project" value="UniProtKB-UniRule"/>
</dbReference>
<dbReference type="GO" id="GO:0006166">
    <property type="term" value="P:purine ribonucleoside salvage"/>
    <property type="evidence" value="ECO:0007669"/>
    <property type="project" value="UniProtKB-KW"/>
</dbReference>
<dbReference type="GO" id="GO:0032265">
    <property type="term" value="P:XMP salvage"/>
    <property type="evidence" value="ECO:0007669"/>
    <property type="project" value="UniProtKB-UniRule"/>
</dbReference>
<dbReference type="CDD" id="cd06223">
    <property type="entry name" value="PRTases_typeI"/>
    <property type="match status" value="1"/>
</dbReference>
<dbReference type="Gene3D" id="3.40.50.2020">
    <property type="match status" value="1"/>
</dbReference>
<dbReference type="HAMAP" id="MF_01903">
    <property type="entry name" value="XGPRT"/>
    <property type="match status" value="1"/>
</dbReference>
<dbReference type="InterPro" id="IPR000836">
    <property type="entry name" value="PRibTrfase_dom"/>
</dbReference>
<dbReference type="InterPro" id="IPR029057">
    <property type="entry name" value="PRTase-like"/>
</dbReference>
<dbReference type="InterPro" id="IPR023747">
    <property type="entry name" value="Xanthine_Guanine_PRibTrfase"/>
</dbReference>
<dbReference type="NCBIfam" id="NF006613">
    <property type="entry name" value="PRK09177.1"/>
    <property type="match status" value="1"/>
</dbReference>
<dbReference type="PANTHER" id="PTHR39563">
    <property type="entry name" value="XANTHINE PHOSPHORIBOSYLTRANSFERASE"/>
    <property type="match status" value="1"/>
</dbReference>
<dbReference type="PANTHER" id="PTHR39563:SF1">
    <property type="entry name" value="XANTHINE-GUANINE PHOSPHORIBOSYLTRANSFERASE"/>
    <property type="match status" value="1"/>
</dbReference>
<dbReference type="Pfam" id="PF00156">
    <property type="entry name" value="Pribosyltran"/>
    <property type="match status" value="1"/>
</dbReference>
<dbReference type="SUPFAM" id="SSF53271">
    <property type="entry name" value="PRTase-like"/>
    <property type="match status" value="1"/>
</dbReference>
<dbReference type="PROSITE" id="PS00103">
    <property type="entry name" value="PUR_PYR_PR_TRANSFER"/>
    <property type="match status" value="1"/>
</dbReference>
<organism>
    <name type="scientific">Bradyrhizobium diazoefficiens (strain JCM 10833 / BCRC 13528 / IAM 13628 / NBRC 14792 / USDA 110)</name>
    <dbReference type="NCBI Taxonomy" id="224911"/>
    <lineage>
        <taxon>Bacteria</taxon>
        <taxon>Pseudomonadati</taxon>
        <taxon>Pseudomonadota</taxon>
        <taxon>Alphaproteobacteria</taxon>
        <taxon>Hyphomicrobiales</taxon>
        <taxon>Nitrobacteraceae</taxon>
        <taxon>Bradyrhizobium</taxon>
    </lineage>
</organism>
<evidence type="ECO:0000255" key="1">
    <source>
        <dbReference type="HAMAP-Rule" id="MF_01903"/>
    </source>
</evidence>
<gene>
    <name evidence="1" type="primary">gpt</name>
    <name type="ordered locus">bll5610</name>
</gene>
<keyword id="KW-0997">Cell inner membrane</keyword>
<keyword id="KW-1003">Cell membrane</keyword>
<keyword id="KW-0328">Glycosyltransferase</keyword>
<keyword id="KW-0460">Magnesium</keyword>
<keyword id="KW-0472">Membrane</keyword>
<keyword id="KW-0479">Metal-binding</keyword>
<keyword id="KW-0660">Purine salvage</keyword>
<keyword id="KW-1185">Reference proteome</keyword>
<keyword id="KW-0808">Transferase</keyword>
<reference key="1">
    <citation type="journal article" date="2002" name="DNA Res.">
        <title>Complete genomic sequence of nitrogen-fixing symbiotic bacterium Bradyrhizobium japonicum USDA110.</title>
        <authorList>
            <person name="Kaneko T."/>
            <person name="Nakamura Y."/>
            <person name="Sato S."/>
            <person name="Minamisawa K."/>
            <person name="Uchiumi T."/>
            <person name="Sasamoto S."/>
            <person name="Watanabe A."/>
            <person name="Idesawa K."/>
            <person name="Iriguchi M."/>
            <person name="Kawashima K."/>
            <person name="Kohara M."/>
            <person name="Matsumoto M."/>
            <person name="Shimpo S."/>
            <person name="Tsuruoka H."/>
            <person name="Wada T."/>
            <person name="Yamada M."/>
            <person name="Tabata S."/>
        </authorList>
    </citation>
    <scope>NUCLEOTIDE SEQUENCE [LARGE SCALE GENOMIC DNA]</scope>
    <source>
        <strain>JCM 10833 / BCRC 13528 / IAM 13628 / NBRC 14792 / USDA 110</strain>
    </source>
</reference>
<name>XGPT_BRADU</name>
<sequence>MMGGEAPELSAQERAGKAFPVSWDQFHRDCRALTWRLNEVGPFHAVIAITRGGLVPAAIVARELGVRVIDTVCIASYDHNKQGELQVLKGISEAAMKLGGGTGKGLLIVDDLVDTGKTGKLVREMLPDAHFATVYAKPKGRPLVDTYITEVSQDTWIFFPWDTALSYHPPLRDGAA</sequence>
<accession>Q89IM4</accession>
<protein>
    <recommendedName>
        <fullName evidence="1">Xanthine-guanine phosphoribosyltransferase</fullName>
        <shortName evidence="1">XGPRT</shortName>
        <ecNumber evidence="1">2.4.2.-</ecNumber>
        <ecNumber evidence="1">2.4.2.22</ecNumber>
    </recommendedName>
    <alternativeName>
        <fullName evidence="1">Xanthine phosphoribosyltransferase</fullName>
    </alternativeName>
</protein>
<comment type="function">
    <text evidence="1">Purine salvage pathway enzyme that catalyzes the transfer of the ribosyl-5-phosphate group from 5-phospho-alpha-D-ribose 1-diphosphate (PRPP) to the N9 position of the 6-oxopurines guanine and xanthine to form the corresponding ribonucleotides GMP (guanosine 5'-monophosphate) and XMP (xanthosine 5'-monophosphate), with the release of PPi. To a lesser extent, also acts on hypoxanthine.</text>
</comment>
<comment type="catalytic activity">
    <reaction evidence="1">
        <text>GMP + diphosphate = guanine + 5-phospho-alpha-D-ribose 1-diphosphate</text>
        <dbReference type="Rhea" id="RHEA:25424"/>
        <dbReference type="ChEBI" id="CHEBI:16235"/>
        <dbReference type="ChEBI" id="CHEBI:33019"/>
        <dbReference type="ChEBI" id="CHEBI:58017"/>
        <dbReference type="ChEBI" id="CHEBI:58115"/>
    </reaction>
    <physiologicalReaction direction="right-to-left" evidence="1">
        <dbReference type="Rhea" id="RHEA:25426"/>
    </physiologicalReaction>
</comment>
<comment type="catalytic activity">
    <reaction evidence="1">
        <text>XMP + diphosphate = xanthine + 5-phospho-alpha-D-ribose 1-diphosphate</text>
        <dbReference type="Rhea" id="RHEA:10800"/>
        <dbReference type="ChEBI" id="CHEBI:17712"/>
        <dbReference type="ChEBI" id="CHEBI:33019"/>
        <dbReference type="ChEBI" id="CHEBI:57464"/>
        <dbReference type="ChEBI" id="CHEBI:58017"/>
        <dbReference type="EC" id="2.4.2.22"/>
    </reaction>
    <physiologicalReaction direction="right-to-left" evidence="1">
        <dbReference type="Rhea" id="RHEA:10802"/>
    </physiologicalReaction>
</comment>
<comment type="catalytic activity">
    <reaction evidence="1">
        <text>IMP + diphosphate = hypoxanthine + 5-phospho-alpha-D-ribose 1-diphosphate</text>
        <dbReference type="Rhea" id="RHEA:17973"/>
        <dbReference type="ChEBI" id="CHEBI:17368"/>
        <dbReference type="ChEBI" id="CHEBI:33019"/>
        <dbReference type="ChEBI" id="CHEBI:58017"/>
        <dbReference type="ChEBI" id="CHEBI:58053"/>
    </reaction>
    <physiologicalReaction direction="right-to-left" evidence="1">
        <dbReference type="Rhea" id="RHEA:17975"/>
    </physiologicalReaction>
</comment>
<comment type="cofactor">
    <cofactor evidence="1">
        <name>Mg(2+)</name>
        <dbReference type="ChEBI" id="CHEBI:18420"/>
    </cofactor>
</comment>
<comment type="pathway">
    <text evidence="1">Purine metabolism; GMP biosynthesis via salvage pathway; GMP from guanine: step 1/1.</text>
</comment>
<comment type="pathway">
    <text evidence="1">Purine metabolism; XMP biosynthesis via salvage pathway; XMP from xanthine: step 1/1.</text>
</comment>
<comment type="subunit">
    <text evidence="1">Homotetramer.</text>
</comment>
<comment type="subcellular location">
    <subcellularLocation>
        <location evidence="1">Cell inner membrane</location>
        <topology evidence="1">Peripheral membrane protein</topology>
    </subcellularLocation>
</comment>
<comment type="similarity">
    <text evidence="1">Belongs to the purine/pyrimidine phosphoribosyltransferase family. XGPT subfamily.</text>
</comment>